<keyword id="KW-1185">Reference proteome</keyword>
<dbReference type="EMBL" id="AE016826">
    <property type="protein sequence ID" value="AAO26789.1"/>
    <property type="molecule type" value="Genomic_DNA"/>
</dbReference>
<dbReference type="RefSeq" id="WP_011091190.1">
    <property type="nucleotide sequence ID" value="NC_004545.1"/>
</dbReference>
<dbReference type="SMR" id="Q89B12"/>
<dbReference type="STRING" id="224915.bbp_050"/>
<dbReference type="KEGG" id="bab:bbp_050"/>
<dbReference type="eggNOG" id="COG0607">
    <property type="taxonomic scope" value="Bacteria"/>
</dbReference>
<dbReference type="HOGENOM" id="CLU_089574_1_5_6"/>
<dbReference type="OrthoDB" id="9808735at2"/>
<dbReference type="Proteomes" id="UP000000601">
    <property type="component" value="Chromosome"/>
</dbReference>
<dbReference type="CDD" id="cd00158">
    <property type="entry name" value="RHOD"/>
    <property type="match status" value="1"/>
</dbReference>
<dbReference type="Gene3D" id="3.40.250.10">
    <property type="entry name" value="Rhodanese-like domain"/>
    <property type="match status" value="1"/>
</dbReference>
<dbReference type="InterPro" id="IPR001763">
    <property type="entry name" value="Rhodanese-like_dom"/>
</dbReference>
<dbReference type="InterPro" id="IPR036873">
    <property type="entry name" value="Rhodanese-like_dom_sf"/>
</dbReference>
<dbReference type="Pfam" id="PF00581">
    <property type="entry name" value="Rhodanese"/>
    <property type="match status" value="1"/>
</dbReference>
<dbReference type="SMART" id="SM00450">
    <property type="entry name" value="RHOD"/>
    <property type="match status" value="1"/>
</dbReference>
<dbReference type="SUPFAM" id="SSF52821">
    <property type="entry name" value="Rhodanese/Cell cycle control phosphatase"/>
    <property type="match status" value="1"/>
</dbReference>
<dbReference type="PROSITE" id="PS50206">
    <property type="entry name" value="RHODANESE_3"/>
    <property type="match status" value="1"/>
</dbReference>
<gene>
    <name type="ordered locus">bbp_050</name>
</gene>
<sequence>MFKIIVSFFCDHVFLSVIWLISCVLMIFFTLKDILFCTQFISIMKLIRCINYDRCLLIIDARTEKCFLKGHIINSVNIPYIDVKSVCNISVFKKYKNFSIVIVFKNDNQIDRNYVNFFKSIGCNKIYILRGGMNGWLSNNYPTVCLK</sequence>
<protein>
    <recommendedName>
        <fullName>Uncharacterized protein bbp_050</fullName>
    </recommendedName>
</protein>
<feature type="chain" id="PRO_0000139430" description="Uncharacterized protein bbp_050">
    <location>
        <begin position="1"/>
        <end position="147"/>
    </location>
</feature>
<feature type="domain" description="Rhodanese" evidence="1">
    <location>
        <begin position="52"/>
        <end position="145"/>
    </location>
</feature>
<organism>
    <name type="scientific">Buchnera aphidicola subsp. Baizongia pistaciae (strain Bp)</name>
    <dbReference type="NCBI Taxonomy" id="224915"/>
    <lineage>
        <taxon>Bacteria</taxon>
        <taxon>Pseudomonadati</taxon>
        <taxon>Pseudomonadota</taxon>
        <taxon>Gammaproteobacteria</taxon>
        <taxon>Enterobacterales</taxon>
        <taxon>Erwiniaceae</taxon>
        <taxon>Buchnera</taxon>
    </lineage>
</organism>
<name>Y050_BUCBP</name>
<proteinExistence type="predicted"/>
<reference key="1">
    <citation type="journal article" date="2003" name="Proc. Natl. Acad. Sci. U.S.A.">
        <title>Reductive genome evolution in Buchnera aphidicola.</title>
        <authorList>
            <person name="van Ham R.C.H.J."/>
            <person name="Kamerbeek J."/>
            <person name="Palacios C."/>
            <person name="Rausell C."/>
            <person name="Abascal F."/>
            <person name="Bastolla U."/>
            <person name="Fernandez J.M."/>
            <person name="Jimenez L."/>
            <person name="Postigo M."/>
            <person name="Silva F.J."/>
            <person name="Tamames J."/>
            <person name="Viguera E."/>
            <person name="Latorre A."/>
            <person name="Valencia A."/>
            <person name="Moran F."/>
            <person name="Moya A."/>
        </authorList>
    </citation>
    <scope>NUCLEOTIDE SEQUENCE [LARGE SCALE GENOMIC DNA]</scope>
    <source>
        <strain>Bp</strain>
    </source>
</reference>
<accession>Q89B12</accession>
<evidence type="ECO:0000255" key="1">
    <source>
        <dbReference type="PROSITE-ProRule" id="PRU00173"/>
    </source>
</evidence>